<comment type="subcellular location">
    <subcellularLocation>
        <location evidence="1">Cell inner membrane</location>
        <topology evidence="1">Multi-pass membrane protein</topology>
    </subcellularLocation>
</comment>
<comment type="similarity">
    <text evidence="1">Belongs to the UPF0060 family.</text>
</comment>
<comment type="sequence caution" evidence="2">
    <conflict type="erroneous initiation">
        <sequence resource="EMBL-CDS" id="ABE07247"/>
    </conflict>
</comment>
<sequence length="108" mass="11901">MIKTTLLFFATALCEIIGCFLPWLWLKRNASIWLLLPAGISLALFVWLLTLHPAASGRVYAAYGGVYVCTALIWLRVVDGVKLTLYDWTGALIALCGMLIIVAGWGRT</sequence>
<name>YNFA_ECOUT</name>
<reference key="1">
    <citation type="journal article" date="2006" name="Proc. Natl. Acad. Sci. U.S.A.">
        <title>Identification of genes subject to positive selection in uropathogenic strains of Escherichia coli: a comparative genomics approach.</title>
        <authorList>
            <person name="Chen S.L."/>
            <person name="Hung C.-S."/>
            <person name="Xu J."/>
            <person name="Reigstad C.S."/>
            <person name="Magrini V."/>
            <person name="Sabo A."/>
            <person name="Blasiar D."/>
            <person name="Bieri T."/>
            <person name="Meyer R.R."/>
            <person name="Ozersky P."/>
            <person name="Armstrong J.R."/>
            <person name="Fulton R.S."/>
            <person name="Latreille J.P."/>
            <person name="Spieth J."/>
            <person name="Hooton T.M."/>
            <person name="Mardis E.R."/>
            <person name="Hultgren S.J."/>
            <person name="Gordon J.I."/>
        </authorList>
    </citation>
    <scope>NUCLEOTIDE SEQUENCE [LARGE SCALE GENOMIC DNA]</scope>
    <source>
        <strain>UTI89 / UPEC</strain>
    </source>
</reference>
<gene>
    <name evidence="1" type="primary">ynfA</name>
    <name type="ordered locus">UTI89_C1769</name>
</gene>
<organism>
    <name type="scientific">Escherichia coli (strain UTI89 / UPEC)</name>
    <dbReference type="NCBI Taxonomy" id="364106"/>
    <lineage>
        <taxon>Bacteria</taxon>
        <taxon>Pseudomonadati</taxon>
        <taxon>Pseudomonadota</taxon>
        <taxon>Gammaproteobacteria</taxon>
        <taxon>Enterobacterales</taxon>
        <taxon>Enterobacteriaceae</taxon>
        <taxon>Escherichia</taxon>
    </lineage>
</organism>
<evidence type="ECO:0000255" key="1">
    <source>
        <dbReference type="HAMAP-Rule" id="MF_00010"/>
    </source>
</evidence>
<evidence type="ECO:0000305" key="2"/>
<protein>
    <recommendedName>
        <fullName evidence="1">UPF0060 membrane protein YnfA</fullName>
    </recommendedName>
</protein>
<keyword id="KW-0997">Cell inner membrane</keyword>
<keyword id="KW-1003">Cell membrane</keyword>
<keyword id="KW-0472">Membrane</keyword>
<keyword id="KW-0812">Transmembrane</keyword>
<keyword id="KW-1133">Transmembrane helix</keyword>
<proteinExistence type="inferred from homology"/>
<feature type="chain" id="PRO_0000282222" description="UPF0060 membrane protein YnfA">
    <location>
        <begin position="1"/>
        <end position="108"/>
    </location>
</feature>
<feature type="topological domain" description="Periplasmic" evidence="1">
    <location>
        <begin position="1"/>
        <end position="5"/>
    </location>
</feature>
<feature type="transmembrane region" description="Helical" evidence="1">
    <location>
        <begin position="6"/>
        <end position="26"/>
    </location>
</feature>
<feature type="topological domain" description="Cytoplasmic" evidence="1">
    <location>
        <begin position="27"/>
        <end position="30"/>
    </location>
</feature>
<feature type="transmembrane region" description="Helical" evidence="1">
    <location>
        <begin position="31"/>
        <end position="51"/>
    </location>
</feature>
<feature type="topological domain" description="Periplasmic" evidence="1">
    <location>
        <begin position="52"/>
        <end position="60"/>
    </location>
</feature>
<feature type="transmembrane region" description="Helical" evidence="1">
    <location>
        <begin position="61"/>
        <end position="81"/>
    </location>
</feature>
<feature type="topological domain" description="Cytoplasmic" evidence="1">
    <location>
        <begin position="82"/>
        <end position="84"/>
    </location>
</feature>
<feature type="transmembrane region" description="Helical" evidence="1">
    <location>
        <begin position="85"/>
        <end position="105"/>
    </location>
</feature>
<feature type="topological domain" description="Periplasmic" evidence="1">
    <location>
        <begin position="106"/>
        <end position="108"/>
    </location>
</feature>
<dbReference type="EMBL" id="CP000243">
    <property type="protein sequence ID" value="ABE07247.1"/>
    <property type="status" value="ALT_INIT"/>
    <property type="molecule type" value="Genomic_DNA"/>
</dbReference>
<dbReference type="RefSeq" id="WP_001304355.1">
    <property type="nucleotide sequence ID" value="NZ_CP064825.1"/>
</dbReference>
<dbReference type="SMR" id="Q1RBL7"/>
<dbReference type="KEGG" id="eci:UTI89_C1769"/>
<dbReference type="HOGENOM" id="CLU_117653_2_1_6"/>
<dbReference type="Proteomes" id="UP000001952">
    <property type="component" value="Chromosome"/>
</dbReference>
<dbReference type="GO" id="GO:0005886">
    <property type="term" value="C:plasma membrane"/>
    <property type="evidence" value="ECO:0007669"/>
    <property type="project" value="UniProtKB-SubCell"/>
</dbReference>
<dbReference type="HAMAP" id="MF_00010">
    <property type="entry name" value="UPF0060"/>
    <property type="match status" value="1"/>
</dbReference>
<dbReference type="InterPro" id="IPR003844">
    <property type="entry name" value="UPF0060"/>
</dbReference>
<dbReference type="NCBIfam" id="NF002586">
    <property type="entry name" value="PRK02237.1"/>
    <property type="match status" value="1"/>
</dbReference>
<dbReference type="PANTHER" id="PTHR36116">
    <property type="entry name" value="UPF0060 MEMBRANE PROTEIN YNFA"/>
    <property type="match status" value="1"/>
</dbReference>
<dbReference type="PANTHER" id="PTHR36116:SF1">
    <property type="entry name" value="UPF0060 MEMBRANE PROTEIN YNFA"/>
    <property type="match status" value="1"/>
</dbReference>
<dbReference type="Pfam" id="PF02694">
    <property type="entry name" value="UPF0060"/>
    <property type="match status" value="1"/>
</dbReference>
<dbReference type="SUPFAM" id="SSF103481">
    <property type="entry name" value="Multidrug resistance efflux transporter EmrE"/>
    <property type="match status" value="1"/>
</dbReference>
<accession>Q1RBL7</accession>